<proteinExistence type="evidence at protein level"/>
<keyword id="KW-0007">Acetylation</keyword>
<keyword id="KW-0010">Activator</keyword>
<keyword id="KW-0965">Cell junction</keyword>
<keyword id="KW-0175">Coiled coil</keyword>
<keyword id="KW-0903">Direct protein sequencing</keyword>
<keyword id="KW-0238">DNA-binding</keyword>
<keyword id="KW-1017">Isopeptide bond</keyword>
<keyword id="KW-0488">Methylation</keyword>
<keyword id="KW-0507">mRNA processing</keyword>
<keyword id="KW-0508">mRNA splicing</keyword>
<keyword id="KW-0539">Nucleus</keyword>
<keyword id="KW-0597">Phosphoprotein</keyword>
<keyword id="KW-1267">Proteomics identification</keyword>
<keyword id="KW-1185">Reference proteome</keyword>
<keyword id="KW-0747">Spliceosome</keyword>
<keyword id="KW-0804">Transcription</keyword>
<keyword id="KW-0805">Transcription regulation</keyword>
<keyword id="KW-0043">Tumor suppressor</keyword>
<keyword id="KW-0832">Ubl conjugation</keyword>
<accession>Q9H307</accession>
<accession>B4DZX8</accession>
<accession>O60899</accession>
<accession>Q53EM7</accession>
<accession>Q6P5X4</accession>
<accession>Q7KYL1</accession>
<accession>Q99738</accession>
<accession>Q9UHZ9</accession>
<accession>Q9UQR9</accession>
<feature type="initiator methionine" description="Removed" evidence="20 25">
    <location>
        <position position="1"/>
    </location>
</feature>
<feature type="chain" id="PRO_0000190242" description="Pinin">
    <location>
        <begin position="2"/>
        <end position="717"/>
    </location>
</feature>
<feature type="region of interest" description="Necessary for interaction with RNPS1">
    <location>
        <begin position="2"/>
        <end position="284"/>
    </location>
</feature>
<feature type="region of interest" description="Necessary for mediating alternative 5' splicing">
    <location>
        <begin position="2"/>
        <end position="167"/>
    </location>
</feature>
<feature type="region of interest" description="Necessary for interactions with KRT8, KRT18 and KRT19">
    <location>
        <begin position="2"/>
        <end position="98"/>
    </location>
</feature>
<feature type="region of interest" description="Disordered" evidence="3">
    <location>
        <begin position="46"/>
        <end position="139"/>
    </location>
</feature>
<feature type="region of interest" description="Sufficient for PSAP complex assembly">
    <location>
        <begin position="221"/>
        <end position="284"/>
    </location>
</feature>
<feature type="region of interest" description="Disordered" evidence="3">
    <location>
        <begin position="279"/>
        <end position="717"/>
    </location>
</feature>
<feature type="region of interest" description="Necessary for interaction with PPIG" evidence="12">
    <location>
        <begin position="606"/>
        <end position="717"/>
    </location>
</feature>
<feature type="coiled-coil region" evidence="2">
    <location>
        <begin position="2"/>
        <end position="32"/>
    </location>
</feature>
<feature type="coiled-coil region" evidence="2">
    <location>
        <begin position="163"/>
        <end position="234"/>
    </location>
</feature>
<feature type="coiled-coil region" evidence="2">
    <location>
        <begin position="287"/>
        <end position="379"/>
    </location>
</feature>
<feature type="coiled-coil region" evidence="2">
    <location>
        <begin position="446"/>
        <end position="467"/>
    </location>
</feature>
<feature type="compositionally biased region" description="Basic and acidic residues" evidence="3">
    <location>
        <begin position="87"/>
        <end position="100"/>
    </location>
</feature>
<feature type="compositionally biased region" description="Basic and acidic residues" evidence="3">
    <location>
        <begin position="120"/>
        <end position="139"/>
    </location>
</feature>
<feature type="compositionally biased region" description="Basic and acidic residues" evidence="3">
    <location>
        <begin position="279"/>
        <end position="316"/>
    </location>
</feature>
<feature type="compositionally biased region" description="Acidic residues" evidence="3">
    <location>
        <begin position="330"/>
        <end position="340"/>
    </location>
</feature>
<feature type="compositionally biased region" description="Basic and acidic residues" evidence="3">
    <location>
        <begin position="341"/>
        <end position="350"/>
    </location>
</feature>
<feature type="compositionally biased region" description="Basic and acidic residues" evidence="3">
    <location>
        <begin position="359"/>
        <end position="379"/>
    </location>
</feature>
<feature type="compositionally biased region" description="Basic and acidic residues" evidence="3">
    <location>
        <begin position="394"/>
        <end position="413"/>
    </location>
</feature>
<feature type="compositionally biased region" description="Basic and acidic residues" evidence="3">
    <location>
        <begin position="453"/>
        <end position="467"/>
    </location>
</feature>
<feature type="compositionally biased region" description="Low complexity" evidence="3">
    <location>
        <begin position="476"/>
        <end position="498"/>
    </location>
</feature>
<feature type="compositionally biased region" description="Basic residues" evidence="3">
    <location>
        <begin position="555"/>
        <end position="575"/>
    </location>
</feature>
<feature type="compositionally biased region" description="Low complexity" evidence="3">
    <location>
        <begin position="576"/>
        <end position="630"/>
    </location>
</feature>
<feature type="compositionally biased region" description="Basic residues" evidence="3">
    <location>
        <begin position="634"/>
        <end position="652"/>
    </location>
</feature>
<feature type="compositionally biased region" description="Basic and acidic residues" evidence="3">
    <location>
        <begin position="653"/>
        <end position="664"/>
    </location>
</feature>
<feature type="compositionally biased region" description="Basic and acidic residues" evidence="3">
    <location>
        <begin position="671"/>
        <end position="691"/>
    </location>
</feature>
<feature type="compositionally biased region" description="Basic and acidic residues" evidence="3">
    <location>
        <begin position="702"/>
        <end position="717"/>
    </location>
</feature>
<feature type="modified residue" description="N-acetylalanine" evidence="20 25">
    <location>
        <position position="2"/>
    </location>
</feature>
<feature type="modified residue" description="Phosphoserine" evidence="30">
    <location>
        <position position="48"/>
    </location>
</feature>
<feature type="modified residue" description="Omega-N-methylarginine" evidence="1">
    <location>
        <position position="54"/>
    </location>
</feature>
<feature type="modified residue" description="Phosphoserine" evidence="29">
    <location>
        <position position="58"/>
    </location>
</feature>
<feature type="modified residue" description="Phosphoserine" evidence="22 24 28 29 30 31">
    <location>
        <position position="66"/>
    </location>
</feature>
<feature type="modified residue" description="Phosphoserine" evidence="28">
    <location>
        <position position="96"/>
    </location>
</feature>
<feature type="modified residue" description="Phosphoserine" evidence="23 24 28 29 30 31">
    <location>
        <position position="100"/>
    </location>
</feature>
<feature type="modified residue" description="Phosphoserine" evidence="28">
    <location>
        <position position="114"/>
    </location>
</feature>
<feature type="modified residue" description="Phosphoserine" evidence="28">
    <location>
        <position position="115"/>
    </location>
</feature>
<feature type="modified residue" description="Phosphothreonine" evidence="28">
    <location>
        <position position="124"/>
    </location>
</feature>
<feature type="modified residue" description="N6-acetyllysine; alternate" evidence="26">
    <location>
        <position position="238"/>
    </location>
</feature>
<feature type="modified residue" description="N6-succinyllysine; alternate" evidence="1">
    <location>
        <position position="238"/>
    </location>
</feature>
<feature type="modified residue" description="Phosphoserine" evidence="23 28 29 30 31">
    <location>
        <position position="347"/>
    </location>
</feature>
<feature type="modified residue" description="Phosphoserine" evidence="24">
    <location>
        <position position="375"/>
    </location>
</feature>
<feature type="modified residue" description="Phosphoserine" evidence="23 27 28 30">
    <location>
        <position position="381"/>
    </location>
</feature>
<feature type="modified residue" description="Phosphoserine" evidence="1">
    <location>
        <position position="443"/>
    </location>
</feature>
<feature type="modified residue" description="Phosphoserine" evidence="28 29 30">
    <location>
        <position position="450"/>
    </location>
</feature>
<feature type="modified residue" description="Phosphoserine" evidence="24 28 30">
    <location>
        <position position="552"/>
    </location>
</feature>
<feature type="modified residue" description="Phosphoserine" evidence="29">
    <location>
        <position position="658"/>
    </location>
</feature>
<feature type="modified residue" description="Phosphoserine" evidence="29">
    <location>
        <position position="692"/>
    </location>
</feature>
<feature type="modified residue" description="Phosphoserine" evidence="29">
    <location>
        <position position="695"/>
    </location>
</feature>
<feature type="cross-link" description="Glycyl lysine isopeptide (Lys-Gly) (interchain with G-Cter in SUMO2)" evidence="33 34 36">
    <location>
        <position position="109"/>
    </location>
</feature>
<feature type="cross-link" description="Glycyl lysine isopeptide (Lys-Gly) (interchain with G-Cter in SUMO2)" evidence="36">
    <location>
        <position position="121"/>
    </location>
</feature>
<feature type="cross-link" description="Glycyl lysine isopeptide (Lys-Gly) (interchain with G-Cter in SUMO2)" evidence="36">
    <location>
        <position position="137"/>
    </location>
</feature>
<feature type="cross-link" description="Glycyl lysine isopeptide (Lys-Gly) (interchain with G-Cter in SUMO2)" evidence="36">
    <location>
        <position position="155"/>
    </location>
</feature>
<feature type="cross-link" description="Glycyl lysine isopeptide (Lys-Gly) (interchain with G-Cter in SUMO1); alternate" evidence="32">
    <location>
        <position position="157"/>
    </location>
</feature>
<feature type="cross-link" description="Glycyl lysine isopeptide (Lys-Gly) (interchain with G-Cter in SUMO2); alternate" evidence="32 33 34 35 36">
    <location>
        <position position="157"/>
    </location>
</feature>
<feature type="cross-link" description="Glycyl lysine isopeptide (Lys-Gly) (interchain with G-Cter in SUMO2)" evidence="36">
    <location>
        <position position="228"/>
    </location>
</feature>
<feature type="cross-link" description="Glycyl lysine isopeptide (Lys-Gly) (interchain with G-Cter in SUMO2)" evidence="36">
    <location>
        <position position="280"/>
    </location>
</feature>
<feature type="cross-link" description="Glycyl lysine isopeptide (Lys-Gly) (interchain with G-Cter in SUMO2)" evidence="34 36">
    <location>
        <position position="304"/>
    </location>
</feature>
<feature type="cross-link" description="Glycyl lysine isopeptide (Lys-Gly) (interchain with G-Cter in SUMO2)" evidence="36">
    <location>
        <position position="311"/>
    </location>
</feature>
<feature type="cross-link" description="Glycyl lysine isopeptide (Lys-Gly) (interchain with G-Cter in SUMO2)" evidence="36">
    <location>
        <position position="359"/>
    </location>
</feature>
<feature type="cross-link" description="Glycyl lysine isopeptide (Lys-Gly) (interchain with G-Cter in SUMO2)" evidence="36">
    <location>
        <position position="365"/>
    </location>
</feature>
<feature type="cross-link" description="Glycyl lysine isopeptide (Lys-Gly) (interchain with G-Cter in SUMO2)" evidence="34 36">
    <location>
        <position position="528"/>
    </location>
</feature>
<feature type="cross-link" description="Glycyl lysine isopeptide (Lys-Gly) (interchain with G-Cter in SUMO2)" evidence="36">
    <location>
        <position position="536"/>
    </location>
</feature>
<feature type="cross-link" description="Glycyl lysine isopeptide (Lys-Gly) (interchain with G-Cter in SUMO2)" evidence="34 36">
    <location>
        <position position="553"/>
    </location>
</feature>
<feature type="sequence variant" id="VAR_023368" description="In dbSNP:rs13021." evidence="4 19">
    <original>S</original>
    <variation>G</variation>
    <location>
        <position position="671"/>
    </location>
</feature>
<feature type="mutagenesis site" description="Abolishes interaction with KRT18." evidence="5">
    <original>L</original>
    <variation>P</variation>
    <location>
        <position position="8"/>
    </location>
</feature>
<feature type="mutagenesis site" description="Abolishes interaction with KRT18." evidence="5">
    <original>L</original>
    <variation>P</variation>
    <location>
        <position position="19"/>
    </location>
</feature>
<feature type="mutagenesis site" description="Abolishes interaction with CTBP1 and shows moderate relief of CTBP1-mediated repression." evidence="13">
    <original>PE</original>
    <variation>AA</variation>
    <location>
        <begin position="502"/>
        <end position="503"/>
    </location>
</feature>
<feature type="sequence conflict" description="In Ref. 1; AAB48304." evidence="21" ref="1">
    <location>
        <position position="69"/>
    </location>
</feature>
<feature type="sequence conflict" description="In Ref. 1; AAB48304." evidence="21" ref="1">
    <original>K</original>
    <variation>N</variation>
    <location>
        <position position="168"/>
    </location>
</feature>
<feature type="sequence conflict" description="In Ref. 1; AAB48304." evidence="21" ref="1">
    <original>E</original>
    <variation>D</variation>
    <location>
        <position position="268"/>
    </location>
</feature>
<feature type="sequence conflict" description="In Ref. 1; AAB48304." evidence="21" ref="1">
    <original>Q</original>
    <variation>H</variation>
    <location>
        <position position="303"/>
    </location>
</feature>
<feature type="sequence conflict" description="In Ref. 1; AAB48304." evidence="21" ref="1">
    <original>E</original>
    <variation>V</variation>
    <location>
        <position position="320"/>
    </location>
</feature>
<feature type="sequence conflict" description="In Ref. 1; AAB48304." evidence="21" ref="1">
    <original>A</original>
    <variation>G</variation>
    <location>
        <position position="343"/>
    </location>
</feature>
<feature type="sequence conflict" description="In Ref. 2; AAG33941." evidence="21" ref="2">
    <original>DQ</original>
    <variation>EE</variation>
    <location>
        <begin position="402"/>
        <end position="403"/>
    </location>
</feature>
<feature type="sequence conflict" description="In Ref. 9; BAG64240 and 7; CAA70874." evidence="21" ref="9 7">
    <original>T</original>
    <variation>S</variation>
    <location>
        <position position="441"/>
    </location>
</feature>
<feature type="sequence conflict" description="In Ref. 1; AAB48304." evidence="21" ref="1">
    <original>E</original>
    <variation>D</variation>
    <location>
        <position position="459"/>
    </location>
</feature>
<feature type="sequence conflict" description="In Ref. 1; AAB48304." evidence="21" ref="1">
    <original>P</original>
    <variation>A</variation>
    <location>
        <position position="478"/>
    </location>
</feature>
<feature type="sequence conflict" description="In Ref. 1; AA sequence." evidence="21" ref="1">
    <original>QP</original>
    <variation>EPQPQLQPEPAQPQLQSQPQLQLQSQCHA</variation>
    <location>
        <begin position="491"/>
        <end position="492"/>
    </location>
</feature>
<feature type="sequence conflict" description="In Ref. 1; AAB48304." evidence="21" ref="1">
    <original>Q</original>
    <variation>H</variation>
    <location>
        <position position="497"/>
    </location>
</feature>
<feature type="sequence conflict" description="In Ref. 1; AAB48304." evidence="21" ref="1">
    <original>Q</original>
    <variation>H</variation>
    <location>
        <position position="520"/>
    </location>
</feature>
<feature type="sequence conflict" description="In Ref. 1; AAB48304." evidence="21" ref="1">
    <original>L</original>
    <variation>F</variation>
    <location>
        <position position="523"/>
    </location>
</feature>
<feature type="sequence conflict" description="In Ref. 1; AA sequence." evidence="21" ref="1">
    <original>P</original>
    <variation>T</variation>
    <location>
        <position position="541"/>
    </location>
</feature>
<feature type="sequence conflict" description="In Ref. 1; AAB48304." evidence="21" ref="1">
    <original>E</original>
    <variation>D</variation>
    <location>
        <position position="543"/>
    </location>
</feature>
<feature type="sequence conflict" description="In Ref. 1; AA sequence." evidence="21" ref="1">
    <original>T</original>
    <variation>I</variation>
    <location>
        <position position="547"/>
    </location>
</feature>
<feature type="sequence conflict" description="In Ref. 1; AA sequence." evidence="21" ref="1">
    <original>P</original>
    <variation>S</variation>
    <location>
        <position position="550"/>
    </location>
</feature>
<feature type="sequence conflict" description="In Ref. 1; AA sequence." evidence="21" ref="1">
    <original>E</original>
    <variation>D</variation>
    <location>
        <position position="551"/>
    </location>
</feature>
<feature type="sequence conflict" description="In Ref. 1; AAB48304." evidence="21" ref="1">
    <original>KSKTK</original>
    <variation>ESETN</variation>
    <location>
        <begin position="553"/>
        <end position="557"/>
    </location>
</feature>
<feature type="sequence conflict" description="In Ref. 1; AAB48304." evidence="21" ref="1">
    <original>A</original>
    <variation>T</variation>
    <location>
        <position position="566"/>
    </location>
</feature>
<feature type="sequence conflict" description="In Ref. 1; AAB48304." evidence="21" ref="1">
    <original>KTS</original>
    <variation>RTT</variation>
    <location>
        <begin position="569"/>
        <end position="571"/>
    </location>
</feature>
<feature type="sequence conflict" description="In Ref. 3; AAF17209 and 8; CAA71377." evidence="21" ref="3 8">
    <original>S</original>
    <variation>G</variation>
    <location>
        <position position="618"/>
    </location>
</feature>
<feature type="sequence conflict" description="In Ref. 7; CAA70874." evidence="21" ref="7">
    <original>S</original>
    <variation>SST</variation>
    <location>
        <position position="623"/>
    </location>
</feature>
<feature type="sequence conflict" description="In Ref. 2; AAG33941." evidence="21" ref="2">
    <original>H</original>
    <variation>P</variation>
    <location>
        <position position="664"/>
    </location>
</feature>
<dbReference type="EMBL" id="U77718">
    <property type="protein sequence ID" value="AAB48304.1"/>
    <property type="molecule type" value="mRNA"/>
</dbReference>
<dbReference type="EMBL" id="AF195139">
    <property type="protein sequence ID" value="AAG33941.1"/>
    <property type="molecule type" value="Genomic_DNA"/>
</dbReference>
<dbReference type="EMBL" id="AF112222">
    <property type="protein sequence ID" value="AAF17209.1"/>
    <property type="molecule type" value="mRNA"/>
</dbReference>
<dbReference type="EMBL" id="AK223612">
    <property type="protein sequence ID" value="BAD97332.1"/>
    <property type="molecule type" value="mRNA"/>
</dbReference>
<dbReference type="EMBL" id="BC062602">
    <property type="protein sequence ID" value="AAH62602.1"/>
    <property type="molecule type" value="mRNA"/>
</dbReference>
<dbReference type="EMBL" id="Y09703">
    <property type="protein sequence ID" value="CAA70874.1"/>
    <property type="status" value="ALT_FRAME"/>
    <property type="molecule type" value="mRNA"/>
</dbReference>
<dbReference type="EMBL" id="Y10351">
    <property type="protein sequence ID" value="CAA71377.1"/>
    <property type="molecule type" value="mRNA"/>
</dbReference>
<dbReference type="EMBL" id="AK303136">
    <property type="protein sequence ID" value="BAG64240.1"/>
    <property type="molecule type" value="mRNA"/>
</dbReference>
<dbReference type="CCDS" id="CCDS9671.1"/>
<dbReference type="RefSeq" id="NP_002678.2">
    <property type="nucleotide sequence ID" value="NM_002687.3"/>
</dbReference>
<dbReference type="SMR" id="Q9H307"/>
<dbReference type="BioGRID" id="111412">
    <property type="interactions" value="319"/>
</dbReference>
<dbReference type="ComplexPortal" id="CPX-2257">
    <property type="entry name" value="PSAP splicing-associated complex"/>
</dbReference>
<dbReference type="ComplexPortal" id="CPX-2653">
    <property type="entry name" value="SNIP1/SkIP associated RNA-processing complex"/>
</dbReference>
<dbReference type="CORUM" id="Q9H307"/>
<dbReference type="DIP" id="DIP-32950N"/>
<dbReference type="FunCoup" id="Q9H307">
    <property type="interactions" value="2531"/>
</dbReference>
<dbReference type="IntAct" id="Q9H307">
    <property type="interactions" value="200"/>
</dbReference>
<dbReference type="MINT" id="Q9H307"/>
<dbReference type="STRING" id="9606.ENSP00000216832"/>
<dbReference type="MoonProt" id="Q9H307"/>
<dbReference type="TCDB" id="3.A.18.1.1">
    <property type="family name" value="the nuclear mrna exporter (mrna-e) family"/>
</dbReference>
<dbReference type="GlyGen" id="Q9H307">
    <property type="glycosylation" value="2 sites, 1 O-linked glycan (1 site)"/>
</dbReference>
<dbReference type="iPTMnet" id="Q9H307"/>
<dbReference type="MetOSite" id="Q9H307"/>
<dbReference type="PhosphoSitePlus" id="Q9H307"/>
<dbReference type="SwissPalm" id="Q9H307"/>
<dbReference type="BioMuta" id="PNN"/>
<dbReference type="DMDM" id="73921750"/>
<dbReference type="jPOST" id="Q9H307"/>
<dbReference type="MassIVE" id="Q9H307"/>
<dbReference type="PaxDb" id="9606-ENSP00000216832"/>
<dbReference type="PeptideAtlas" id="Q9H307"/>
<dbReference type="Pumba" id="Q9H307"/>
<dbReference type="Antibodypedia" id="55">
    <property type="antibodies" value="275 antibodies from 32 providers"/>
</dbReference>
<dbReference type="DNASU" id="5411"/>
<dbReference type="Ensembl" id="ENST00000216832.9">
    <property type="protein sequence ID" value="ENSP00000216832.4"/>
    <property type="gene ID" value="ENSG00000100941.9"/>
</dbReference>
<dbReference type="GeneID" id="5411"/>
<dbReference type="KEGG" id="hsa:5411"/>
<dbReference type="MANE-Select" id="ENST00000216832.9">
    <property type="protein sequence ID" value="ENSP00000216832.4"/>
    <property type="RefSeq nucleotide sequence ID" value="NM_002687.4"/>
    <property type="RefSeq protein sequence ID" value="NP_002678.3"/>
</dbReference>
<dbReference type="UCSC" id="uc001wuw.5">
    <property type="organism name" value="human"/>
</dbReference>
<dbReference type="AGR" id="HGNC:9162"/>
<dbReference type="CTD" id="5411"/>
<dbReference type="DisGeNET" id="5411"/>
<dbReference type="GeneCards" id="PNN"/>
<dbReference type="HGNC" id="HGNC:9162">
    <property type="gene designation" value="PNN"/>
</dbReference>
<dbReference type="HPA" id="ENSG00000100941">
    <property type="expression patterns" value="Low tissue specificity"/>
</dbReference>
<dbReference type="MIM" id="603154">
    <property type="type" value="gene"/>
</dbReference>
<dbReference type="neXtProt" id="NX_Q9H307"/>
<dbReference type="OpenTargets" id="ENSG00000100941"/>
<dbReference type="PharmGKB" id="PA33484"/>
<dbReference type="VEuPathDB" id="HostDB:ENSG00000100941"/>
<dbReference type="eggNOG" id="KOG3756">
    <property type="taxonomic scope" value="Eukaryota"/>
</dbReference>
<dbReference type="GeneTree" id="ENSGT00730000111160"/>
<dbReference type="HOGENOM" id="CLU_025370_0_0_1"/>
<dbReference type="InParanoid" id="Q9H307"/>
<dbReference type="OMA" id="FENRRTE"/>
<dbReference type="OrthoDB" id="330772at2759"/>
<dbReference type="PAN-GO" id="Q9H307">
    <property type="GO annotations" value="1 GO annotation based on evolutionary models"/>
</dbReference>
<dbReference type="PhylomeDB" id="Q9H307"/>
<dbReference type="TreeFam" id="TF331859"/>
<dbReference type="PathwayCommons" id="Q9H307"/>
<dbReference type="Reactome" id="R-HSA-72163">
    <property type="pathway name" value="mRNA Splicing - Major Pathway"/>
</dbReference>
<dbReference type="SignaLink" id="Q9H307"/>
<dbReference type="SIGNOR" id="Q9H307"/>
<dbReference type="BioGRID-ORCS" id="5411">
    <property type="hits" value="673 hits in 1160 CRISPR screens"/>
</dbReference>
<dbReference type="ChiTaRS" id="PNN">
    <property type="organism name" value="human"/>
</dbReference>
<dbReference type="GeneWiki" id="Pinin"/>
<dbReference type="GenomeRNAi" id="5411"/>
<dbReference type="Pharos" id="Q9H307">
    <property type="development level" value="Tbio"/>
</dbReference>
<dbReference type="PRO" id="PR:Q9H307"/>
<dbReference type="Proteomes" id="UP000005640">
    <property type="component" value="Chromosome 14"/>
</dbReference>
<dbReference type="RNAct" id="Q9H307">
    <property type="molecule type" value="protein"/>
</dbReference>
<dbReference type="Bgee" id="ENSG00000100941">
    <property type="expression patterns" value="Expressed in tendon of biceps brachii and 210 other cell types or tissues"/>
</dbReference>
<dbReference type="ExpressionAtlas" id="Q9H307">
    <property type="expression patterns" value="baseline and differential"/>
</dbReference>
<dbReference type="GO" id="GO:0071013">
    <property type="term" value="C:catalytic step 2 spliceosome"/>
    <property type="evidence" value="ECO:0000314"/>
    <property type="project" value="UniProtKB"/>
</dbReference>
<dbReference type="GO" id="GO:0005911">
    <property type="term" value="C:cell-cell junction"/>
    <property type="evidence" value="ECO:0000304"/>
    <property type="project" value="ProtInc"/>
</dbReference>
<dbReference type="GO" id="GO:0030057">
    <property type="term" value="C:desmosome"/>
    <property type="evidence" value="ECO:0007669"/>
    <property type="project" value="UniProtKB-SubCell"/>
</dbReference>
<dbReference type="GO" id="GO:0005882">
    <property type="term" value="C:intermediate filament"/>
    <property type="evidence" value="ECO:0000304"/>
    <property type="project" value="ProtInc"/>
</dbReference>
<dbReference type="GO" id="GO:0016020">
    <property type="term" value="C:membrane"/>
    <property type="evidence" value="ECO:0007005"/>
    <property type="project" value="UniProtKB"/>
</dbReference>
<dbReference type="GO" id="GO:0016607">
    <property type="term" value="C:nuclear speck"/>
    <property type="evidence" value="ECO:0000314"/>
    <property type="project" value="HPA"/>
</dbReference>
<dbReference type="GO" id="GO:0005654">
    <property type="term" value="C:nucleoplasm"/>
    <property type="evidence" value="ECO:0000304"/>
    <property type="project" value="Reactome"/>
</dbReference>
<dbReference type="GO" id="GO:0005886">
    <property type="term" value="C:plasma membrane"/>
    <property type="evidence" value="ECO:0000304"/>
    <property type="project" value="ProtInc"/>
</dbReference>
<dbReference type="GO" id="GO:0003677">
    <property type="term" value="F:DNA binding"/>
    <property type="evidence" value="ECO:0007669"/>
    <property type="project" value="UniProtKB-KW"/>
</dbReference>
<dbReference type="GO" id="GO:0003723">
    <property type="term" value="F:RNA binding"/>
    <property type="evidence" value="ECO:0007005"/>
    <property type="project" value="UniProtKB"/>
</dbReference>
<dbReference type="GO" id="GO:0005198">
    <property type="term" value="F:structural molecule activity"/>
    <property type="evidence" value="ECO:0000303"/>
    <property type="project" value="ProtInc"/>
</dbReference>
<dbReference type="GO" id="GO:0007155">
    <property type="term" value="P:cell adhesion"/>
    <property type="evidence" value="ECO:0000304"/>
    <property type="project" value="ProtInc"/>
</dbReference>
<dbReference type="GO" id="GO:0000398">
    <property type="term" value="P:mRNA splicing, via spliceosome"/>
    <property type="evidence" value="ECO:0000305"/>
    <property type="project" value="UniProtKB"/>
</dbReference>
<dbReference type="InterPro" id="IPR039853">
    <property type="entry name" value="Pinin"/>
</dbReference>
<dbReference type="InterPro" id="IPR006786">
    <property type="entry name" value="Pinin_SDK_MemA"/>
</dbReference>
<dbReference type="InterPro" id="IPR006787">
    <property type="entry name" value="Pinin_SDK_N"/>
</dbReference>
<dbReference type="PANTHER" id="PTHR12707:SF0">
    <property type="entry name" value="PININ"/>
    <property type="match status" value="1"/>
</dbReference>
<dbReference type="PANTHER" id="PTHR12707">
    <property type="entry name" value="PINN"/>
    <property type="match status" value="1"/>
</dbReference>
<dbReference type="Pfam" id="PF04696">
    <property type="entry name" value="Pinin_SDK_memA"/>
    <property type="match status" value="1"/>
</dbReference>
<dbReference type="Pfam" id="PF04697">
    <property type="entry name" value="Pinin_SDK_N"/>
    <property type="match status" value="1"/>
</dbReference>
<comment type="function">
    <text evidence="7 9 13 14 16">Transcriptional activator binding to the E-box 1 core sequence of the E-cadherin promoter gene; the core-binding sequence is 5'CAGGTG-3'. Capable of reversing CTBP1-mediated transcription repression. Auxiliary component of the splicing-dependent multiprotein exon junction complex (EJC) deposited at splice junction on mRNAs. The EJC is a dynamic structure consisting of core proteins and several peripheral nuclear and cytoplasmic associated factors that join the complex only transiently either during EJC assembly or during subsequent mRNA metabolism. Participates in the regulation of alternative pre-mRNA splicing. Associates to spliced mRNA within 60 nt upstream of the 5'-splice sites. Component of the PSAP complex which binds RNA in a sequence-independent manner and is proposed to be recruited to the EJC prior to or during the splicing process and to regulate specific excision of introns in specific transcription subsets. Involved in the establishment and maintenance of epithelia cell-cell adhesion. Potential tumor suppressor for renal cell carcinoma.</text>
</comment>
<comment type="subunit">
    <text evidence="5 6 8 9 10 11 12 13 15 16">Found in a mRNA splicing-dependent exon junction complex (EJC). Found in a complex with SR proteins. Found in a mRNP complex with RNPS1. Component of the PSAP complex consisting of RNPS1, SAP18 and PNN. Interacts with PNISR, CTBP1, CTBP2, KRT8, KRT18, KRT19, PS1D/PNO40, PPIG, RNPS1, SFRS4 and SRRM2. Identified in the spliceosome C complex.</text>
</comment>
<comment type="interaction">
    <interactant intactId="EBI-681904">
        <id>Q9H307</id>
    </interactant>
    <interactant intactId="EBI-396258">
        <id>Q9UKV3</id>
        <label>ACIN1</label>
    </interactant>
    <organismsDiffer>false</organismsDiffer>
    <experiments>3</experiments>
</comment>
<comment type="interaction">
    <interactant intactId="EBI-681904">
        <id>Q9H307</id>
    </interactant>
    <interactant intactId="EBI-347804">
        <id>P68400</id>
        <label>CSNK2A1</label>
    </interactant>
    <organismsDiffer>false</organismsDiffer>
    <experiments>2</experiments>
</comment>
<comment type="interaction">
    <interactant intactId="EBI-681904">
        <id>Q9H307</id>
    </interactant>
    <interactant intactId="EBI-3044087">
        <id>Q7Z3Y8</id>
        <label>KRT27</label>
    </interactant>
    <organismsDiffer>false</organismsDiffer>
    <experiments>3</experiments>
</comment>
<comment type="interaction">
    <interactant intactId="EBI-681904">
        <id>Q9H307</id>
    </interactant>
    <interactant intactId="EBI-15972541">
        <id>Q15287-1</id>
        <label>RNPS1</label>
    </interactant>
    <organismsDiffer>false</organismsDiffer>
    <experiments>3</experiments>
</comment>
<comment type="interaction">
    <interactant intactId="EBI-681904">
        <id>Q9H307</id>
    </interactant>
    <interactant intactId="EBI-1044156">
        <id>O00422</id>
        <label>SAP18</label>
    </interactant>
    <organismsDiffer>false</organismsDiffer>
    <experiments>4</experiments>
</comment>
<comment type="interaction">
    <interactant intactId="EBI-681904">
        <id>Q9H307</id>
    </interactant>
    <interactant intactId="EBI-2462271">
        <id>Q15428</id>
        <label>SF3A2</label>
    </interactant>
    <organismsDiffer>false</organismsDiffer>
    <experiments>2</experiments>
</comment>
<comment type="interaction">
    <interactant intactId="EBI-681904">
        <id>Q9H307</id>
    </interactant>
    <interactant intactId="EBI-632715">
        <id>Q13573</id>
        <label>SNW1</label>
    </interactant>
    <organismsDiffer>false</organismsDiffer>
    <experiments>3</experiments>
</comment>
<comment type="subcellular location">
    <subcellularLocation>
        <location>Nucleus speckle</location>
    </subcellularLocation>
    <subcellularLocation>
        <location>Cell junction</location>
        <location>Desmosome</location>
    </subcellularLocation>
    <text>Cell-cell contact area, predominantly desmosome of intercellular adherens junction. Not a nucleocytoplasmic shuttling protein.</text>
</comment>
<comment type="tissue specificity">
    <text evidence="4 17 18">Expressed in placenta, lung, liver, kidney, pancreas, spleen, thymus, prostate, testis, ovary, small intestine, colon, heart, epidermis, esophagus, brain and smooth and skeletal muscle. Expressed strongly in melanoma metastasis lesions and advanced primary tumors.</text>
</comment>
<comment type="similarity">
    <text evidence="21">Belongs to the pinin family.</text>
</comment>
<comment type="sequence caution" evidence="21">
    <conflict type="frameshift">
        <sequence resource="EMBL-CDS" id="CAA70874"/>
    </conflict>
</comment>
<organism>
    <name type="scientific">Homo sapiens</name>
    <name type="common">Human</name>
    <dbReference type="NCBI Taxonomy" id="9606"/>
    <lineage>
        <taxon>Eukaryota</taxon>
        <taxon>Metazoa</taxon>
        <taxon>Chordata</taxon>
        <taxon>Craniata</taxon>
        <taxon>Vertebrata</taxon>
        <taxon>Euteleostomi</taxon>
        <taxon>Mammalia</taxon>
        <taxon>Eutheria</taxon>
        <taxon>Euarchontoglires</taxon>
        <taxon>Primates</taxon>
        <taxon>Haplorrhini</taxon>
        <taxon>Catarrhini</taxon>
        <taxon>Hominidae</taxon>
        <taxon>Homo</taxon>
    </lineage>
</organism>
<evidence type="ECO:0000250" key="1">
    <source>
        <dbReference type="UniProtKB" id="O35691"/>
    </source>
</evidence>
<evidence type="ECO:0000255" key="2"/>
<evidence type="ECO:0000256" key="3">
    <source>
        <dbReference type="SAM" id="MobiDB-lite"/>
    </source>
</evidence>
<evidence type="ECO:0000269" key="4">
    <source>
    </source>
</evidence>
<evidence type="ECO:0000269" key="5">
    <source>
    </source>
</evidence>
<evidence type="ECO:0000269" key="6">
    <source>
    </source>
</evidence>
<evidence type="ECO:0000269" key="7">
    <source>
    </source>
</evidence>
<evidence type="ECO:0000269" key="8">
    <source>
    </source>
</evidence>
<evidence type="ECO:0000269" key="9">
    <source>
    </source>
</evidence>
<evidence type="ECO:0000269" key="10">
    <source>
    </source>
</evidence>
<evidence type="ECO:0000269" key="11">
    <source>
    </source>
</evidence>
<evidence type="ECO:0000269" key="12">
    <source>
    </source>
</evidence>
<evidence type="ECO:0000269" key="13">
    <source>
    </source>
</evidence>
<evidence type="ECO:0000269" key="14">
    <source>
    </source>
</evidence>
<evidence type="ECO:0000269" key="15">
    <source>
    </source>
</evidence>
<evidence type="ECO:0000269" key="16">
    <source>
    </source>
</evidence>
<evidence type="ECO:0000269" key="17">
    <source>
    </source>
</evidence>
<evidence type="ECO:0000269" key="18">
    <source>
    </source>
</evidence>
<evidence type="ECO:0000269" key="19">
    <source ref="4"/>
</evidence>
<evidence type="ECO:0000269" key="20">
    <source ref="6"/>
</evidence>
<evidence type="ECO:0000305" key="21"/>
<evidence type="ECO:0007744" key="22">
    <source>
    </source>
</evidence>
<evidence type="ECO:0007744" key="23">
    <source>
    </source>
</evidence>
<evidence type="ECO:0007744" key="24">
    <source>
    </source>
</evidence>
<evidence type="ECO:0007744" key="25">
    <source>
    </source>
</evidence>
<evidence type="ECO:0007744" key="26">
    <source>
    </source>
</evidence>
<evidence type="ECO:0007744" key="27">
    <source>
    </source>
</evidence>
<evidence type="ECO:0007744" key="28">
    <source>
    </source>
</evidence>
<evidence type="ECO:0007744" key="29">
    <source>
    </source>
</evidence>
<evidence type="ECO:0007744" key="30">
    <source>
    </source>
</evidence>
<evidence type="ECO:0007744" key="31">
    <source>
    </source>
</evidence>
<evidence type="ECO:0007744" key="32">
    <source>
    </source>
</evidence>
<evidence type="ECO:0007744" key="33">
    <source>
    </source>
</evidence>
<evidence type="ECO:0007744" key="34">
    <source>
    </source>
</evidence>
<evidence type="ECO:0007744" key="35">
    <source>
    </source>
</evidence>
<evidence type="ECO:0007744" key="36">
    <source>
    </source>
</evidence>
<name>PININ_HUMAN</name>
<sequence length="717" mass="81628">MAVAVRTLQEQLEKAKESLKNVDENIRKLTGRDPNDVRPIQARLLALSGPGGGRGRGSLLLRRGFSDSGGGPPAKQRDLEGAVSRLGGERRTRRESRQESDPEDDDVKKPALQSSVVATSKERTRRDLIQDQNMDEKGKQRNRRIFGLLMGTLQKFKQESTVATERQKRRQEIEQKLEVQAEEERKQVENERRELFEERRAKQTELRLLEQKVELAQLQEEWNEHNAKIIKYIRTKTKPHLFYIPGRMCPATQKLIEESQRKMNALFEGRRIEFAEQINKMEARPRRQSMKEKEHQVVRNEEQKAEQEEGKVAQREEELEETGNQHNDVEIEEAGEEEEKEIAIVHSDAEKEQEEEEQKQEMEVKMEEETEVRESEKQQDSQPEEVMDVLEMVENVKHVIADQEVMETNRVESVEPSENEASKELEPEMEFEIEPDKECKTLSPGKENVSALDMEKESEEKEEKESEPQPEPVAQPQPQSQPQLQLQSQSQPVLQSQPPSQPEDLSLAVLQPTPQVTQEQGHLLPERKDFPVESVKLTEVPVEPVLTVHPESKSKTKTRSRSRGRARNKTSKSRSRSSSSSSSSSSSTSSSSGSSSSSGSSSSRSSSSSSSSTSGSSSRDSSSSTSSSSESRSRSRGRGHNRDRKHRRSVDRKRRDTSGLERSHKSSKGGSSRDTKGSKDKNSRSDRKRSISESSRSGKRSSRSERDRKSDRKDKRR</sequence>
<protein>
    <recommendedName>
        <fullName>Pinin</fullName>
    </recommendedName>
    <alternativeName>
        <fullName>140 kDa nuclear and cell adhesion-related phosphoprotein</fullName>
    </alternativeName>
    <alternativeName>
        <fullName>Desmosome-associated protein</fullName>
    </alternativeName>
    <alternativeName>
        <fullName>Domain-rich serine protein</fullName>
        <shortName>DRS protein</shortName>
        <shortName>DRSP</shortName>
    </alternativeName>
    <alternativeName>
        <fullName>Melanoma metastasis clone A protein</fullName>
    </alternativeName>
    <alternativeName>
        <fullName>Nuclear protein SDK3</fullName>
    </alternativeName>
    <alternativeName>
        <fullName>SR-like protein</fullName>
    </alternativeName>
</protein>
<reference key="1">
    <citation type="journal article" date="1996" name="J. Cell Biol.">
        <title>Characterization of pinin, a novel protein associated with the desmosome-intermediate filament complex.</title>
        <authorList>
            <person name="Ouyang P."/>
            <person name="Sugrue S.P."/>
        </authorList>
    </citation>
    <scope>NUCLEOTIDE SEQUENCE [MRNA]</scope>
    <scope>PROTEIN SEQUENCE OF 44-50; 213-228 AND 537-553</scope>
    <scope>PUTATIVE FUNCTION IN EPITHELIA MAINTENANCE</scope>
    <scope>SUBCELLULAR LOCATION</scope>
    <scope>TISSUE SPECIFICITY</scope>
    <source>
        <tissue>Placenta</tissue>
    </source>
</reference>
<reference key="2">
    <citation type="journal article" date="2000" name="Oncogene">
        <title>Characterization of the gene encoding pinin/DRS/memA and evidence for its potential tumor suppressor function.</title>
        <authorList>
            <person name="Shi Y."/>
            <person name="Ouyang P."/>
            <person name="Sugrue S.P."/>
        </authorList>
    </citation>
    <scope>NUCLEOTIDE SEQUENCE [GENOMIC DNA]</scope>
    <scope>PUTATIVE FUNCTION</scope>
</reference>
<reference key="3">
    <citation type="journal article" date="2000" name="Proc. Natl. Acad. Sci. U.S.A.">
        <title>Gene expression profiling in the human hypothalamus-pituitary-adrenal axis and full-length cDNA cloning.</title>
        <authorList>
            <person name="Hu R.-M."/>
            <person name="Han Z.-G."/>
            <person name="Song H.-D."/>
            <person name="Peng Y.-D."/>
            <person name="Huang Q.-H."/>
            <person name="Ren S.-X."/>
            <person name="Gu Y.-J."/>
            <person name="Huang C.-H."/>
            <person name="Li Y.-B."/>
            <person name="Jiang C.-L."/>
            <person name="Fu G."/>
            <person name="Zhang Q.-H."/>
            <person name="Gu B.-W."/>
            <person name="Dai M."/>
            <person name="Mao Y.-F."/>
            <person name="Gao G.-F."/>
            <person name="Rong R."/>
            <person name="Ye M."/>
            <person name="Zhou J."/>
            <person name="Xu S.-H."/>
            <person name="Gu J."/>
            <person name="Shi J.-X."/>
            <person name="Jin W.-R."/>
            <person name="Zhang C.-K."/>
            <person name="Wu T.-M."/>
            <person name="Huang G.-Y."/>
            <person name="Chen Z."/>
            <person name="Chen M.-D."/>
            <person name="Chen J.-L."/>
        </authorList>
    </citation>
    <scope>NUCLEOTIDE SEQUENCE [LARGE SCALE MRNA]</scope>
    <source>
        <tissue>Adrenal gland</tissue>
    </source>
</reference>
<reference key="4">
    <citation type="submission" date="2005-04" db="EMBL/GenBank/DDBJ databases">
        <authorList>
            <person name="Totoki Y."/>
            <person name="Toyoda A."/>
            <person name="Takeda T."/>
            <person name="Sakaki Y."/>
            <person name="Tanaka A."/>
            <person name="Yokoyama S."/>
        </authorList>
    </citation>
    <scope>NUCLEOTIDE SEQUENCE [LARGE SCALE MRNA]</scope>
    <scope>VARIANT GLY-671</scope>
    <source>
        <tissue>Brain</tissue>
    </source>
</reference>
<reference key="5">
    <citation type="journal article" date="2004" name="Genome Res.">
        <title>The status, quality, and expansion of the NIH full-length cDNA project: the Mammalian Gene Collection (MGC).</title>
        <authorList>
            <consortium name="The MGC Project Team"/>
        </authorList>
    </citation>
    <scope>NUCLEOTIDE SEQUENCE [LARGE SCALE MRNA]</scope>
    <source>
        <tissue>Eye</tissue>
    </source>
</reference>
<reference key="6">
    <citation type="submission" date="2006-05" db="UniProtKB">
        <authorList>
            <person name="Bienvenut W.V."/>
            <person name="Kanor S."/>
            <person name="Tissot J.-D."/>
            <person name="Quadroni M."/>
        </authorList>
    </citation>
    <scope>PROTEIN SEQUENCE OF 2-13</scope>
    <scope>CLEAVAGE OF INITIATOR METHIONINE</scope>
    <scope>ACETYLATION AT ALA-2</scope>
    <scope>IDENTIFICATION BY MASS SPECTROMETRY</scope>
    <source>
        <tissue>T-cell</tissue>
    </source>
</reference>
<reference key="7">
    <citation type="journal article" date="1999" name="Biochim. Biophys. Acta">
        <title>memA/DRS, a putative mediator of multiprotein complexes, is overexpressed in the metastasizing human melanoma cell lines BLM and MV3.</title>
        <authorList>
            <person name="Degen W.G.J."/>
            <person name="Agterbos M.A."/>
            <person name="Muyrers J.P.P."/>
            <person name="Bloemers H.P.J."/>
            <person name="Swart G.W.M."/>
        </authorList>
    </citation>
    <scope>NUCLEOTIDE SEQUENCE [MRNA] OF 3-717</scope>
    <scope>VARIANT GLY-671</scope>
    <scope>TISSUE SPECIFICITY</scope>
    <source>
        <tissue>Melanoma</tissue>
    </source>
</reference>
<reference key="8">
    <citation type="journal article" date="1997" name="Differentiation">
        <title>Evidence that 'pinin', reportedly a differentiation-specific desmosomal protein, is actually a widespread nuclear protein.</title>
        <authorList>
            <person name="Brandner J."/>
            <person name="Reidenbach S."/>
            <person name="Franke W.W."/>
        </authorList>
    </citation>
    <scope>NUCLEOTIDE SEQUENCE [MRNA] OF 7-717</scope>
    <scope>SUBCELLULAR LOCATION</scope>
    <scope>TISSUE SPECIFICITY</scope>
    <source>
        <tissue>Keratinocyte</tissue>
    </source>
</reference>
<reference key="9">
    <citation type="journal article" date="2004" name="Nat. Genet.">
        <title>Complete sequencing and characterization of 21,243 full-length human cDNAs.</title>
        <authorList>
            <person name="Ota T."/>
            <person name="Suzuki Y."/>
            <person name="Nishikawa T."/>
            <person name="Otsuki T."/>
            <person name="Sugiyama T."/>
            <person name="Irie R."/>
            <person name="Wakamatsu A."/>
            <person name="Hayashi K."/>
            <person name="Sato H."/>
            <person name="Nagai K."/>
            <person name="Kimura K."/>
            <person name="Makita H."/>
            <person name="Sekine M."/>
            <person name="Obayashi M."/>
            <person name="Nishi T."/>
            <person name="Shibahara T."/>
            <person name="Tanaka T."/>
            <person name="Ishii S."/>
            <person name="Yamamoto J."/>
            <person name="Saito K."/>
            <person name="Kawai Y."/>
            <person name="Isono Y."/>
            <person name="Nakamura Y."/>
            <person name="Nagahari K."/>
            <person name="Murakami K."/>
            <person name="Yasuda T."/>
            <person name="Iwayanagi T."/>
            <person name="Wagatsuma M."/>
            <person name="Shiratori A."/>
            <person name="Sudo H."/>
            <person name="Hosoiri T."/>
            <person name="Kaku Y."/>
            <person name="Kodaira H."/>
            <person name="Kondo H."/>
            <person name="Sugawara M."/>
            <person name="Takahashi M."/>
            <person name="Kanda K."/>
            <person name="Yokoi T."/>
            <person name="Furuya T."/>
            <person name="Kikkawa E."/>
            <person name="Omura Y."/>
            <person name="Abe K."/>
            <person name="Kamihara K."/>
            <person name="Katsuta N."/>
            <person name="Sato K."/>
            <person name="Tanikawa M."/>
            <person name="Yamazaki M."/>
            <person name="Ninomiya K."/>
            <person name="Ishibashi T."/>
            <person name="Yamashita H."/>
            <person name="Murakawa K."/>
            <person name="Fujimori K."/>
            <person name="Tanai H."/>
            <person name="Kimata M."/>
            <person name="Watanabe M."/>
            <person name="Hiraoka S."/>
            <person name="Chiba Y."/>
            <person name="Ishida S."/>
            <person name="Ono Y."/>
            <person name="Takiguchi S."/>
            <person name="Watanabe S."/>
            <person name="Yosida M."/>
            <person name="Hotuta T."/>
            <person name="Kusano J."/>
            <person name="Kanehori K."/>
            <person name="Takahashi-Fujii A."/>
            <person name="Hara H."/>
            <person name="Tanase T.-O."/>
            <person name="Nomura Y."/>
            <person name="Togiya S."/>
            <person name="Komai F."/>
            <person name="Hara R."/>
            <person name="Takeuchi K."/>
            <person name="Arita M."/>
            <person name="Imose N."/>
            <person name="Musashino K."/>
            <person name="Yuuki H."/>
            <person name="Oshima A."/>
            <person name="Sasaki N."/>
            <person name="Aotsuka S."/>
            <person name="Yoshikawa Y."/>
            <person name="Matsunawa H."/>
            <person name="Ichihara T."/>
            <person name="Shiohata N."/>
            <person name="Sano S."/>
            <person name="Moriya S."/>
            <person name="Momiyama H."/>
            <person name="Satoh N."/>
            <person name="Takami S."/>
            <person name="Terashima Y."/>
            <person name="Suzuki O."/>
            <person name="Nakagawa S."/>
            <person name="Senoh A."/>
            <person name="Mizoguchi H."/>
            <person name="Goto Y."/>
            <person name="Shimizu F."/>
            <person name="Wakebe H."/>
            <person name="Hishigaki H."/>
            <person name="Watanabe T."/>
            <person name="Sugiyama A."/>
            <person name="Takemoto M."/>
            <person name="Kawakami B."/>
            <person name="Yamazaki M."/>
            <person name="Watanabe K."/>
            <person name="Kumagai A."/>
            <person name="Itakura S."/>
            <person name="Fukuzumi Y."/>
            <person name="Fujimori Y."/>
            <person name="Komiyama M."/>
            <person name="Tashiro H."/>
            <person name="Tanigami A."/>
            <person name="Fujiwara T."/>
            <person name="Ono T."/>
            <person name="Yamada K."/>
            <person name="Fujii Y."/>
            <person name="Ozaki K."/>
            <person name="Hirao M."/>
            <person name="Ohmori Y."/>
            <person name="Kawabata A."/>
            <person name="Hikiji T."/>
            <person name="Kobatake N."/>
            <person name="Inagaki H."/>
            <person name="Ikema Y."/>
            <person name="Okamoto S."/>
            <person name="Okitani R."/>
            <person name="Kawakami T."/>
            <person name="Noguchi S."/>
            <person name="Itoh T."/>
            <person name="Shigeta K."/>
            <person name="Senba T."/>
            <person name="Matsumura K."/>
            <person name="Nakajima Y."/>
            <person name="Mizuno T."/>
            <person name="Morinaga M."/>
            <person name="Sasaki M."/>
            <person name="Togashi T."/>
            <person name="Oyama M."/>
            <person name="Hata H."/>
            <person name="Watanabe M."/>
            <person name="Komatsu T."/>
            <person name="Mizushima-Sugano J."/>
            <person name="Satoh T."/>
            <person name="Shirai Y."/>
            <person name="Takahashi Y."/>
            <person name="Nakagawa K."/>
            <person name="Okumura K."/>
            <person name="Nagase T."/>
            <person name="Nomura N."/>
            <person name="Kikuchi H."/>
            <person name="Masuho Y."/>
            <person name="Yamashita R."/>
            <person name="Nakai K."/>
            <person name="Yada T."/>
            <person name="Nakamura Y."/>
            <person name="Ohara O."/>
            <person name="Isogai T."/>
            <person name="Sugano S."/>
        </authorList>
    </citation>
    <scope>NUCLEOTIDE SEQUENCE [LARGE SCALE MRNA] OF 105-717</scope>
    <source>
        <tissue>Thymus</tissue>
    </source>
</reference>
<reference key="10">
    <citation type="journal article" date="1999" name="Biochem. Biophys. Res. Commun.">
        <title>Antibodies differentiate desmosome-form and nucleus-form pinin: evidence that pinin is a moonlighting protein with dual location at the desmosome and within the nucleus.</title>
        <authorList>
            <person name="Ouyang P."/>
        </authorList>
    </citation>
    <scope>SUBCELLULAR LOCATION</scope>
</reference>
<reference key="11">
    <citation type="journal article" date="2000" name="J. Biol. Chem.">
        <title>Dissection of protein linkage between keratins and pinin, a protein with dual location at desmosome-intermediate filament complex and in the nucleus.</title>
        <authorList>
            <person name="Shi J."/>
            <person name="Sugrue S.P."/>
        </authorList>
    </citation>
    <scope>INTERACTION WITH KRT8; KRT18 AND KRT19</scope>
    <scope>MUTAGENESIS OF LEU-8 AND LEU-19</scope>
</reference>
<reference key="12">
    <citation type="journal article" date="2002" name="Biochem. Biophys. Res. Commun.">
        <title>Modulation of alternative pre-mRNA splicing in vivo by pinin.</title>
        <authorList>
            <person name="Wang P."/>
            <person name="Lou P.-J."/>
            <person name="Leu S."/>
            <person name="Ouyang P."/>
        </authorList>
    </citation>
    <scope>FUNCTION IN PRE-MRNA SPLICING</scope>
    <scope>SUBCELLULAR LOCATION</scope>
</reference>
<reference key="13">
    <citation type="journal article" date="2002" name="RNA">
        <title>Purification and characterization of native spliceosomes suitable for three-dimensional structural analysis.</title>
        <authorList>
            <person name="Jurica M.S."/>
            <person name="Licklider L.J."/>
            <person name="Gygi S.P."/>
            <person name="Grigorieff N."/>
            <person name="Moore M.J."/>
        </authorList>
    </citation>
    <scope>IDENTIFICATION BY MASS SPECTROMETRY</scope>
    <scope>IDENTIFICATION IN THE SPLICEOSOMAL C COMPLEX</scope>
</reference>
<reference key="14">
    <citation type="journal article" date="2003" name="Biochem. Biophys. Res. Commun.">
        <title>Molecular characterization of a novel nucleolar protein, pNO40.</title>
        <authorList>
            <person name="Chang W.-L."/>
            <person name="Lee D.-C."/>
            <person name="Leu S."/>
            <person name="Huang Y.-M."/>
            <person name="Lu M.-C."/>
            <person name="Ouyang P."/>
        </authorList>
    </citation>
    <scope>INTERACTION WITH PS1D/PNO40</scope>
</reference>
<reference key="15">
    <citation type="journal article" date="2003" name="Invest. Ophthalmol. Vis. Sci.">
        <title>Pinin/DRS/memA interacts with SRp75, SRm300 and SRrp130 in corneal epithelial cells.</title>
        <authorList>
            <person name="Zimowska G."/>
            <person name="Shi J."/>
            <person name="Munguba G."/>
            <person name="Jackson M.R."/>
            <person name="Alpatov R."/>
            <person name="Simmons M.N."/>
            <person name="Shi Y."/>
            <person name="Sugrue S.P."/>
        </authorList>
    </citation>
    <scope>IDENTIFICATION IN A COMPLEX WITH SR PROTEINS</scope>
    <scope>INTERACTION WITH PNISR; SFRS4 AND SRRM2</scope>
    <scope>SUBCELLULAR LOCATION</scope>
</reference>
<reference key="16">
    <citation type="journal article" date="2003" name="Mol. Cell. Biol.">
        <title>Nuclear Pnn/DRS protein binds to spliced mRNPs and participates in mRNA processing and export via interaction with RNPS1.</title>
        <authorList>
            <person name="Li C."/>
            <person name="Lin R.-I."/>
            <person name="Lai M.-C."/>
            <person name="Ouyang P."/>
            <person name="Tarn W.-Y."/>
        </authorList>
    </citation>
    <scope>FUNCTION IN PRE-MRNA SPLICING</scope>
    <scope>IDENTIFICATION IN A MRNP COMPLEX WITH RNPS1</scope>
    <scope>INTERACTION WITH RNPS1</scope>
    <scope>SUBCELLULAR LOCATION</scope>
</reference>
<reference key="17">
    <citation type="journal article" date="2004" name="Biochem. Biophys. Res. Commun.">
        <title>Over-expression of SR-cyclophilin, an interaction partner of nuclear pinin, releases SR family splicing factors from nuclear speckles.</title>
        <authorList>
            <person name="Lin C.L."/>
            <person name="Leu S."/>
            <person name="Lu M.C."/>
            <person name="Ouyang P."/>
        </authorList>
    </citation>
    <scope>INTERACTION WITH PPIG</scope>
    <scope>SUBCELLULAR LOCATION</scope>
</reference>
<reference key="18">
    <citation type="journal article" date="2004" name="Mol. Cell. Biol.">
        <title>Human RNPS1 and its associated factors: a versatile alternative pre-mRNA splicing regulator in vivo.</title>
        <authorList>
            <person name="Sakashita E."/>
            <person name="Tatsumi S."/>
            <person name="Werner D."/>
            <person name="Endo H."/>
            <person name="Mayeda A."/>
        </authorList>
    </citation>
    <scope>INTERACTION WITH RNPS1</scope>
</reference>
<reference key="19">
    <citation type="journal article" date="2004" name="Mol. Cell. Biol.">
        <title>Nuclear speckle-associated protein Pnn/DRS binds to the transcriptional corepressor CtBP and relieves CtBP-mediated repression of the E-cadherin gene.</title>
        <authorList>
            <person name="Alpatov R."/>
            <person name="Munguba G.C."/>
            <person name="Caton P."/>
            <person name="Joo J.H."/>
            <person name="Shi Y."/>
            <person name="Shi Y."/>
            <person name="Hunt M.E."/>
            <person name="Sugrue S.P."/>
        </authorList>
    </citation>
    <scope>FUNCTION IN TRANSCRIPTIONAL ACTIVATION</scope>
    <scope>DNA-BINDING</scope>
    <scope>INTERACTION WITH CTBP1 AND CTBP2</scope>
    <scope>MUTAGENESIS OF 502-PRO-GLU-503</scope>
</reference>
<reference key="20">
    <citation type="journal article" date="2005" name="Mol. Vis.">
        <title>Reduction of Pnn by RNAi induces loss of cell-cell adhesion between human corneal epithelial cells.</title>
        <authorList>
            <person name="Joo J.-H."/>
            <person name="Alpatov R."/>
            <person name="Munguba G.C."/>
            <person name="Jackson M.R."/>
            <person name="Hunt M.E."/>
            <person name="Sugrue S.P."/>
        </authorList>
    </citation>
    <scope>FUNCTION IN CELL-CELL ADHESION</scope>
    <scope>SUBCELLULAR LOCATION</scope>
</reference>
<reference key="21">
    <citation type="journal article" date="2005" name="RNA">
        <title>Biochemical analysis of the EJC reveals two new factors and a stable tetrameric protein core.</title>
        <authorList>
            <person name="Tange T.O."/>
            <person name="Shibuya T."/>
            <person name="Jurica M.S."/>
            <person name="Moore M.J."/>
        </authorList>
    </citation>
    <scope>IDENTIFICATION IN A MRNA SPLICING-DEPENDENT EXON JUNCTION COMPLEX</scope>
    <scope>IDENTIFICATION BY MASS SPECTROMETRY</scope>
</reference>
<reference key="22">
    <citation type="journal article" date="2006" name="Cell">
        <title>Global, in vivo, and site-specific phosphorylation dynamics in signaling networks.</title>
        <authorList>
            <person name="Olsen J.V."/>
            <person name="Blagoev B."/>
            <person name="Gnad F."/>
            <person name="Macek B."/>
            <person name="Kumar C."/>
            <person name="Mortensen P."/>
            <person name="Mann M."/>
        </authorList>
    </citation>
    <scope>PHOSPHORYLATION [LARGE SCALE ANALYSIS] AT SER-100; SER-347 AND SER-381</scope>
    <scope>IDENTIFICATION BY MASS SPECTROMETRY [LARGE SCALE ANALYSIS]</scope>
    <source>
        <tissue>Cervix carcinoma</tissue>
    </source>
</reference>
<reference key="23">
    <citation type="journal article" date="2006" name="Nat. Biotechnol.">
        <title>A probability-based approach for high-throughput protein phosphorylation analysis and site localization.</title>
        <authorList>
            <person name="Beausoleil S.A."/>
            <person name="Villen J."/>
            <person name="Gerber S.A."/>
            <person name="Rush J."/>
            <person name="Gygi S.P."/>
        </authorList>
    </citation>
    <scope>PHOSPHORYLATION [LARGE SCALE ANALYSIS] AT SER-66</scope>
    <scope>IDENTIFICATION BY MASS SPECTROMETRY [LARGE SCALE ANALYSIS]</scope>
    <source>
        <tissue>Cervix carcinoma</tissue>
    </source>
</reference>
<reference key="24">
    <citation type="journal article" date="2007" name="Science">
        <title>ATM and ATR substrate analysis reveals extensive protein networks responsive to DNA damage.</title>
        <authorList>
            <person name="Matsuoka S."/>
            <person name="Ballif B.A."/>
            <person name="Smogorzewska A."/>
            <person name="McDonald E.R. III"/>
            <person name="Hurov K.E."/>
            <person name="Luo J."/>
            <person name="Bakalarski C.E."/>
            <person name="Zhao Z."/>
            <person name="Solimini N."/>
            <person name="Lerenthal Y."/>
            <person name="Shiloh Y."/>
            <person name="Gygi S.P."/>
            <person name="Elledge S.J."/>
        </authorList>
    </citation>
    <scope>IDENTIFICATION BY MASS SPECTROMETRY [LARGE SCALE ANALYSIS]</scope>
    <source>
        <tissue>Embryonic kidney</tissue>
    </source>
</reference>
<reference key="25">
    <citation type="journal article" date="2008" name="Proc. Natl. Acad. Sci. U.S.A.">
        <title>A quantitative atlas of mitotic phosphorylation.</title>
        <authorList>
            <person name="Dephoure N."/>
            <person name="Zhou C."/>
            <person name="Villen J."/>
            <person name="Beausoleil S.A."/>
            <person name="Bakalarski C.E."/>
            <person name="Elledge S.J."/>
            <person name="Gygi S.P."/>
        </authorList>
    </citation>
    <scope>PHOSPHORYLATION [LARGE SCALE ANALYSIS] AT SER-66; SER-100; SER-375 AND SER-552</scope>
    <scope>IDENTIFICATION BY MASS SPECTROMETRY [LARGE SCALE ANALYSIS]</scope>
    <source>
        <tissue>Cervix carcinoma</tissue>
    </source>
</reference>
<reference key="26">
    <citation type="journal article" date="2009" name="Anal. Chem.">
        <title>Lys-N and trypsin cover complementary parts of the phosphoproteome in a refined SCX-based approach.</title>
        <authorList>
            <person name="Gauci S."/>
            <person name="Helbig A.O."/>
            <person name="Slijper M."/>
            <person name="Krijgsveld J."/>
            <person name="Heck A.J."/>
            <person name="Mohammed S."/>
        </authorList>
    </citation>
    <scope>ACETYLATION [LARGE SCALE ANALYSIS] AT ALA-2</scope>
    <scope>CLEAVAGE OF INITIATOR METHIONINE [LARGE SCALE ANALYSIS]</scope>
    <scope>IDENTIFICATION BY MASS SPECTROMETRY [LARGE SCALE ANALYSIS]</scope>
</reference>
<reference key="27">
    <citation type="journal article" date="2009" name="Sci. Signal.">
        <title>Quantitative phosphoproteomic analysis of T cell receptor signaling reveals system-wide modulation of protein-protein interactions.</title>
        <authorList>
            <person name="Mayya V."/>
            <person name="Lundgren D.H."/>
            <person name="Hwang S.-I."/>
            <person name="Rezaul K."/>
            <person name="Wu L."/>
            <person name="Eng J.K."/>
            <person name="Rodionov V."/>
            <person name="Han D.K."/>
        </authorList>
    </citation>
    <scope>PHOSPHORYLATION [LARGE SCALE ANALYSIS] AT SER-381</scope>
    <scope>IDENTIFICATION BY MASS SPECTROMETRY [LARGE SCALE ANALYSIS]</scope>
    <source>
        <tissue>Leukemic T-cell</tissue>
    </source>
</reference>
<reference key="28">
    <citation type="journal article" date="2009" name="Science">
        <title>Lysine acetylation targets protein complexes and co-regulates major cellular functions.</title>
        <authorList>
            <person name="Choudhary C."/>
            <person name="Kumar C."/>
            <person name="Gnad F."/>
            <person name="Nielsen M.L."/>
            <person name="Rehman M."/>
            <person name="Walther T.C."/>
            <person name="Olsen J.V."/>
            <person name="Mann M."/>
        </authorList>
    </citation>
    <scope>ACETYLATION [LARGE SCALE ANALYSIS] AT LYS-238</scope>
    <scope>IDENTIFICATION BY MASS SPECTROMETRY [LARGE SCALE ANALYSIS]</scope>
</reference>
<reference key="29">
    <citation type="journal article" date="2010" name="Sci. Signal.">
        <title>Quantitative phosphoproteomics reveals widespread full phosphorylation site occupancy during mitosis.</title>
        <authorList>
            <person name="Olsen J.V."/>
            <person name="Vermeulen M."/>
            <person name="Santamaria A."/>
            <person name="Kumar C."/>
            <person name="Miller M.L."/>
            <person name="Jensen L.J."/>
            <person name="Gnad F."/>
            <person name="Cox J."/>
            <person name="Jensen T.S."/>
            <person name="Nigg E.A."/>
            <person name="Brunak S."/>
            <person name="Mann M."/>
        </authorList>
    </citation>
    <scope>PHOSPHORYLATION [LARGE SCALE ANALYSIS] AT SER-66; SER-96; SER-100; SER-114; SER-115; THR-124; SER-347; SER-381; SER-450 AND SER-552</scope>
    <scope>IDENTIFICATION BY MASS SPECTROMETRY [LARGE SCALE ANALYSIS]</scope>
    <source>
        <tissue>Cervix carcinoma</tissue>
    </source>
</reference>
<reference key="30">
    <citation type="journal article" date="2011" name="BMC Syst. Biol.">
        <title>Initial characterization of the human central proteome.</title>
        <authorList>
            <person name="Burkard T.R."/>
            <person name="Planyavsky M."/>
            <person name="Kaupe I."/>
            <person name="Breitwieser F.P."/>
            <person name="Buerckstuemmer T."/>
            <person name="Bennett K.L."/>
            <person name="Superti-Furga G."/>
            <person name="Colinge J."/>
        </authorList>
    </citation>
    <scope>IDENTIFICATION BY MASS SPECTROMETRY [LARGE SCALE ANALYSIS]</scope>
</reference>
<reference key="31">
    <citation type="journal article" date="2011" name="Sci. Signal.">
        <title>System-wide temporal characterization of the proteome and phosphoproteome of human embryonic stem cell differentiation.</title>
        <authorList>
            <person name="Rigbolt K.T."/>
            <person name="Prokhorova T.A."/>
            <person name="Akimov V."/>
            <person name="Henningsen J."/>
            <person name="Johansen P.T."/>
            <person name="Kratchmarova I."/>
            <person name="Kassem M."/>
            <person name="Mann M."/>
            <person name="Olsen J.V."/>
            <person name="Blagoev B."/>
        </authorList>
    </citation>
    <scope>PHOSPHORYLATION [LARGE SCALE ANALYSIS] AT SER-58; SER-66; SER-100; SER-347; SER-450; SER-658; SER-692 AND SER-695</scope>
    <scope>IDENTIFICATION BY MASS SPECTROMETRY [LARGE SCALE ANALYSIS]</scope>
</reference>
<reference key="32">
    <citation type="journal article" date="2012" name="Nat. Struct. Mol. Biol.">
        <title>The structure of the ASAP core complex reveals the existence of a Pinin-containing PSAP complex.</title>
        <authorList>
            <person name="Murachelli A.G."/>
            <person name="Ebert J."/>
            <person name="Basquin C."/>
            <person name="Le Hir H."/>
            <person name="Conti E."/>
        </authorList>
    </citation>
    <scope>IDENTIFICATION IN THE PSAP COMPLEX</scope>
    <scope>FUNCTION OF THE PSAP COMPLEX</scope>
</reference>
<reference key="33">
    <citation type="journal article" date="2013" name="J. Proteome Res.">
        <title>Toward a comprehensive characterization of a human cancer cell phosphoproteome.</title>
        <authorList>
            <person name="Zhou H."/>
            <person name="Di Palma S."/>
            <person name="Preisinger C."/>
            <person name="Peng M."/>
            <person name="Polat A.N."/>
            <person name="Heck A.J."/>
            <person name="Mohammed S."/>
        </authorList>
    </citation>
    <scope>PHOSPHORYLATION [LARGE SCALE ANALYSIS] AT SER-48; SER-66; SER-100; SER-347; SER-381; SER-450 AND SER-552</scope>
    <scope>IDENTIFICATION BY MASS SPECTROMETRY [LARGE SCALE ANALYSIS]</scope>
    <source>
        <tissue>Cervix carcinoma</tissue>
        <tissue>Erythroleukemia</tissue>
    </source>
</reference>
<reference key="34">
    <citation type="journal article" date="2014" name="J. Proteomics">
        <title>An enzyme assisted RP-RPLC approach for in-depth analysis of human liver phosphoproteome.</title>
        <authorList>
            <person name="Bian Y."/>
            <person name="Song C."/>
            <person name="Cheng K."/>
            <person name="Dong M."/>
            <person name="Wang F."/>
            <person name="Huang J."/>
            <person name="Sun D."/>
            <person name="Wang L."/>
            <person name="Ye M."/>
            <person name="Zou H."/>
        </authorList>
    </citation>
    <scope>PHOSPHORYLATION [LARGE SCALE ANALYSIS] AT SER-66; SER-100 AND SER-347</scope>
    <scope>IDENTIFICATION BY MASS SPECTROMETRY [LARGE SCALE ANALYSIS]</scope>
    <source>
        <tissue>Liver</tissue>
    </source>
</reference>
<reference key="35">
    <citation type="journal article" date="2014" name="Nat. Struct. Mol. Biol.">
        <title>Uncovering global SUMOylation signaling networks in a site-specific manner.</title>
        <authorList>
            <person name="Hendriks I.A."/>
            <person name="D'Souza R.C."/>
            <person name="Yang B."/>
            <person name="Verlaan-de Vries M."/>
            <person name="Mann M."/>
            <person name="Vertegaal A.C."/>
        </authorList>
    </citation>
    <scope>SUMOYLATION [LARGE SCALE ANALYSIS] AT LYS-109 AND LYS-157</scope>
    <scope>IDENTIFICATION BY MASS SPECTROMETRY [LARGE SCALE ANALYSIS]</scope>
</reference>
<reference key="36">
    <citation type="journal article" date="2014" name="Proc. Natl. Acad. Sci. U.S.A.">
        <title>Mapping of SUMO sites and analysis of SUMOylation changes induced by external stimuli.</title>
        <authorList>
            <person name="Impens F."/>
            <person name="Radoshevich L."/>
            <person name="Cossart P."/>
            <person name="Ribet D."/>
        </authorList>
    </citation>
    <scope>SUMOYLATION [LARGE SCALE ANALYSIS] AT LYS-157</scope>
    <scope>IDENTIFICATION BY MASS SPECTROMETRY [LARGE SCALE ANALYSIS]</scope>
</reference>
<reference key="37">
    <citation type="journal article" date="2015" name="Cell Rep.">
        <title>SUMO-2 orchestrates chromatin modifiers in response to DNA damage.</title>
        <authorList>
            <person name="Hendriks I.A."/>
            <person name="Treffers L.W."/>
            <person name="Verlaan-de Vries M."/>
            <person name="Olsen J.V."/>
            <person name="Vertegaal A.C."/>
        </authorList>
    </citation>
    <scope>SUMOYLATION [LARGE SCALE ANALYSIS] AT LYS-157</scope>
    <scope>IDENTIFICATION BY MASS SPECTROMETRY [LARGE SCALE ANALYSIS]</scope>
</reference>
<reference key="38">
    <citation type="journal article" date="2015" name="Mol. Cell. Proteomics">
        <title>System-wide analysis of SUMOylation dynamics in response to replication stress reveals novel small ubiquitin-like modified target proteins and acceptor lysines relevant for genome stability.</title>
        <authorList>
            <person name="Xiao Z."/>
            <person name="Chang J.G."/>
            <person name="Hendriks I.A."/>
            <person name="Sigurdsson J.O."/>
            <person name="Olsen J.V."/>
            <person name="Vertegaal A.C."/>
        </authorList>
    </citation>
    <scope>SUMOYLATION [LARGE SCALE ANALYSIS] AT LYS-109; LYS-157; LYS-304; LYS-528 AND LYS-553</scope>
    <scope>IDENTIFICATION BY MASS SPECTROMETRY [LARGE SCALE ANALYSIS]</scope>
</reference>
<reference key="39">
    <citation type="journal article" date="2017" name="Nat. Struct. Mol. Biol.">
        <title>Site-specific mapping of the human SUMO proteome reveals co-modification with phosphorylation.</title>
        <authorList>
            <person name="Hendriks I.A."/>
            <person name="Lyon D."/>
            <person name="Young C."/>
            <person name="Jensen L.J."/>
            <person name="Vertegaal A.C."/>
            <person name="Nielsen M.L."/>
        </authorList>
    </citation>
    <scope>SUMOYLATION [LARGE SCALE ANALYSIS] AT LYS-109; LYS-121; LYS-137; LYS-155; LYS-157; LYS-228; LYS-280; LYS-304; LYS-311; LYS-359; LYS-365; LYS-528; LYS-536 AND LYS-553</scope>
    <scope>IDENTIFICATION BY MASS SPECTROMETRY [LARGE SCALE ANALYSIS]</scope>
</reference>
<gene>
    <name type="primary">PNN</name>
    <name type="synonym">DRS</name>
    <name type="synonym">MEMA</name>
</gene>